<evidence type="ECO:0000250" key="1">
    <source>
        <dbReference type="UniProtKB" id="P51765"/>
    </source>
</evidence>
<evidence type="ECO:0000256" key="2">
    <source>
        <dbReference type="SAM" id="MobiDB-lite"/>
    </source>
</evidence>
<evidence type="ECO:0000269" key="3">
    <source>
    </source>
</evidence>
<evidence type="ECO:0000303" key="4">
    <source>
    </source>
</evidence>
<evidence type="ECO:0000305" key="5"/>
<evidence type="ECO:0000305" key="6">
    <source>
    </source>
</evidence>
<name>CHLF_CHLFP</name>
<dbReference type="EC" id="1.-.-.-"/>
<dbReference type="EMBL" id="AJLM01000026">
    <property type="status" value="NOT_ANNOTATED_CDS"/>
    <property type="molecule type" value="Genomic_DNA"/>
</dbReference>
<dbReference type="RefSeq" id="WP_016873418.1">
    <property type="nucleotide sequence ID" value="NZ_AJLM01000026.1"/>
</dbReference>
<dbReference type="SMR" id="P0DOC9"/>
<dbReference type="GO" id="GO:0009523">
    <property type="term" value="C:photosystem II"/>
    <property type="evidence" value="ECO:0007669"/>
    <property type="project" value="TreeGrafter"/>
</dbReference>
<dbReference type="GO" id="GO:0031676">
    <property type="term" value="C:plasma membrane-derived thylakoid membrane"/>
    <property type="evidence" value="ECO:0007669"/>
    <property type="project" value="UniProtKB-SubCell"/>
</dbReference>
<dbReference type="GO" id="GO:0016168">
    <property type="term" value="F:chlorophyll binding"/>
    <property type="evidence" value="ECO:0007669"/>
    <property type="project" value="UniProtKB-KW"/>
</dbReference>
<dbReference type="GO" id="GO:0045156">
    <property type="term" value="F:electron transporter, transferring electrons within the cyclic electron transport pathway of photosynthesis activity"/>
    <property type="evidence" value="ECO:0007669"/>
    <property type="project" value="InterPro"/>
</dbReference>
<dbReference type="GO" id="GO:0046872">
    <property type="term" value="F:metal ion binding"/>
    <property type="evidence" value="ECO:0007669"/>
    <property type="project" value="UniProtKB-KW"/>
</dbReference>
<dbReference type="GO" id="GO:0016491">
    <property type="term" value="F:oxidoreductase activity"/>
    <property type="evidence" value="ECO:0007669"/>
    <property type="project" value="UniProtKB-KW"/>
</dbReference>
<dbReference type="GO" id="GO:0036067">
    <property type="term" value="P:light-dependent chlorophyll biosynthetic process"/>
    <property type="evidence" value="ECO:0000314"/>
    <property type="project" value="UniProtKB"/>
</dbReference>
<dbReference type="GO" id="GO:0009772">
    <property type="term" value="P:photosynthetic electron transport in photosystem II"/>
    <property type="evidence" value="ECO:0007669"/>
    <property type="project" value="InterPro"/>
</dbReference>
<dbReference type="FunFam" id="1.20.85.10:FF:000002">
    <property type="entry name" value="Photosystem II protein D1"/>
    <property type="match status" value="1"/>
</dbReference>
<dbReference type="Gene3D" id="1.20.85.10">
    <property type="entry name" value="Photosystem II protein D1-like"/>
    <property type="match status" value="1"/>
</dbReference>
<dbReference type="InterPro" id="IPR055266">
    <property type="entry name" value="D1/D2"/>
</dbReference>
<dbReference type="InterPro" id="IPR036854">
    <property type="entry name" value="Photo_II_D1/D2_sf"/>
</dbReference>
<dbReference type="InterPro" id="IPR000484">
    <property type="entry name" value="Photo_RC_L/M"/>
</dbReference>
<dbReference type="InterPro" id="IPR055265">
    <property type="entry name" value="Photo_RC_L/M_CS"/>
</dbReference>
<dbReference type="PANTHER" id="PTHR33149:SF12">
    <property type="entry name" value="PHOTOSYSTEM II D2 PROTEIN"/>
    <property type="match status" value="1"/>
</dbReference>
<dbReference type="PANTHER" id="PTHR33149">
    <property type="entry name" value="PHOTOSYSTEM II PROTEIN D1"/>
    <property type="match status" value="1"/>
</dbReference>
<dbReference type="Pfam" id="PF00124">
    <property type="entry name" value="Photo_RC"/>
    <property type="match status" value="1"/>
</dbReference>
<dbReference type="PRINTS" id="PR00256">
    <property type="entry name" value="REACTNCENTRE"/>
</dbReference>
<dbReference type="SUPFAM" id="SSF81483">
    <property type="entry name" value="Bacterial photosystem II reaction centre, L and M subunits"/>
    <property type="match status" value="1"/>
</dbReference>
<dbReference type="PROSITE" id="PS00244">
    <property type="entry name" value="REACTION_CENTER"/>
    <property type="match status" value="1"/>
</dbReference>
<keyword id="KW-0148">Chlorophyll</keyword>
<keyword id="KW-0149">Chlorophyll biosynthesis</keyword>
<keyword id="KW-0157">Chromophore</keyword>
<keyword id="KW-0460">Magnesium</keyword>
<keyword id="KW-0472">Membrane</keyword>
<keyword id="KW-0479">Metal-binding</keyword>
<keyword id="KW-0560">Oxidoreductase</keyword>
<keyword id="KW-0602">Photosynthesis</keyword>
<keyword id="KW-0793">Thylakoid</keyword>
<keyword id="KW-0812">Transmembrane</keyword>
<keyword id="KW-1133">Transmembrane helix</keyword>
<gene>
    <name evidence="4" type="primary">chlF</name>
    <name evidence="4" type="synonym">psbA4</name>
    <name type="ORF">UYEDRAFT_01161</name>
</gene>
<organism>
    <name type="scientific">Chlorogloeopsis fritschii (strain PCC 9212)</name>
    <dbReference type="NCBI Taxonomy" id="184925"/>
    <lineage>
        <taxon>Bacteria</taxon>
        <taxon>Bacillati</taxon>
        <taxon>Cyanobacteriota</taxon>
        <taxon>Cyanophyceae</taxon>
        <taxon>Nostocales</taxon>
        <taxon>Chlorogloeopsidaceae</taxon>
        <taxon>Chlorogloeopsis</taxon>
    </lineage>
</organism>
<protein>
    <recommendedName>
        <fullName evidence="4">Light-dependent chlorophyll f synthase</fullName>
        <shortName evidence="4">Chl f synthase</shortName>
        <ecNumber>1.-.-.-</ecNumber>
    </recommendedName>
    <alternativeName>
        <fullName evidence="4">Super-rogue PsbA4</fullName>
        <shortName evidence="4">Sr-PsbA4</shortName>
    </alternativeName>
</protein>
<sequence>MKLESDHVIATSDSSDYTSEPTANKLSKRRKKVNYWEKFCSWVTSTENRLYVGWFGVLMIPCVLTAATVFIIAIIAAPPVDMDGIGVPISGSILSGNNIITAAVVPTSAAIGLHFYPIWEAASIDEWLYNGGPYQLIVLHFLIGIIAYQDREWELSYRLGMRPWISLAFTAPVAASVSVLLIYPVGQGSLSAGMPLGISGTFHFMLQFQADHNILMSPLHQLGVIGVLGGAFAAAMHGSLVTSTLIRSHNHSESESINKGYKLGQQHPTYNFRSAQVYLWHLIWQRVSFPNSRKLHFFLAALPVAGIWSAALGVDIAAFDFDYLQFHQPELKSQGQIIHTWADTIDWASLGIKVLDERHIYDFPENLTAGEVVPWK</sequence>
<reference key="1">
    <citation type="journal article" date="2013" name="Genome Biol. Evol.">
        <title>Genomes of Stigonematalean cyanobacteria (subsection V) and the evolution of oxygenic photosynthesis from prokaryotes to plastids.</title>
        <authorList>
            <person name="Dagan T."/>
            <person name="Roettger M."/>
            <person name="Stucken K."/>
            <person name="Landan G."/>
            <person name="Koch R."/>
            <person name="Major P."/>
            <person name="Gould S.B."/>
            <person name="Goremykin V.V."/>
            <person name="Rippka R."/>
            <person name="Tandeau de Marsac N."/>
            <person name="Gugger M."/>
            <person name="Lockhart P.J."/>
            <person name="Allen J.F."/>
            <person name="Brune I."/>
            <person name="Maus I."/>
            <person name="Puehler A."/>
            <person name="Martin W.F."/>
        </authorList>
    </citation>
    <scope>NUCLEOTIDE SEQUENCE [LARGE SCALE GENOMIC DNA]</scope>
</reference>
<reference key="2">
    <citation type="journal article" date="2016" name="Science">
        <title>Light-dependent chlorophyll f synthase is a highly divergent paralog of PsbA of photosystem II.</title>
        <authorList>
            <person name="Ho M.Y."/>
            <person name="Shen G."/>
            <person name="Canniffe D.P."/>
            <person name="Zhao C."/>
            <person name="Bryant D.A."/>
        </authorList>
    </citation>
    <scope>FUNCTION</scope>
    <scope>SUBUNIT</scope>
    <scope>INDUCTION BY FAR RED LIGHT</scope>
    <scope>DISRUPTION PHENOTYPE</scope>
</reference>
<comment type="function">
    <text evidence="3">Synthesizes chlorophyll f or chlorophyllide f (Chl f, 2-formyl chlorophyll a), probably by oxidation of chlorophyll a or chlorophyllide a and reduction of plastoquinone. The reaction is probably light-dependent (PubMed:27386923). Chl f absorbs far red light (FRL, 707 nm in 100% methanol), and is synthesized when cells are grown in FRL, where it provides the advantage of extending the spectral range of harvested light in terrestrial cyanobacteria (PubMed:27386923). When ectopically expressed in Synechococcus PCC 7002 (which does not grow in FRL and does not make Chl f) produces Chl f (0.059% of total chlorophyll) (PubMed:27386923).</text>
</comment>
<comment type="subunit">
    <text evidence="6">Homodimer (PubMed:27386923).</text>
</comment>
<comment type="subcellular location">
    <subcellularLocation>
        <location evidence="5">Cellular thylakoid membrane</location>
        <topology evidence="1">Multi-pass membrane protein</topology>
    </subcellularLocation>
</comment>
<comment type="induction">
    <text evidence="3">By growth in FRL (705-735 nm, 26-30 umol photons/m(2)/s) (PubMed:27386923).</text>
</comment>
<comment type="disruption phenotype">
    <text evidence="3">No synthesis of chlorophyll f when grown in FRL (PubMed:27386923), decreased accumulation of some proteins up-regulated during FRL photoacclimation (FaRLiP).</text>
</comment>
<comment type="miscellaneous">
    <text evidence="4">Due to differences in the C-terminus this protein cannot bind the oxygen-evolving Mn4-Ca-O5 cluster bound by 'normal' PsbA, however it probably still binds plastoquinone and chlorophyll (PubMed:27386923).</text>
</comment>
<comment type="similarity">
    <text>Belongs to the reaction center PufL/M/PsbA/D family.</text>
</comment>
<feature type="chain" id="PRO_0000437940" description="Light-dependent chlorophyll f synthase">
    <location>
        <begin position="1"/>
        <end position="376"/>
    </location>
</feature>
<feature type="transmembrane region" description="Helical" evidence="1">
    <location>
        <begin position="51"/>
        <end position="68"/>
    </location>
</feature>
<feature type="transmembrane region" description="Helical" evidence="1">
    <location>
        <begin position="140"/>
        <end position="155"/>
    </location>
</feature>
<feature type="transmembrane region" description="Helical" evidence="1">
    <location>
        <begin position="164"/>
        <end position="178"/>
    </location>
</feature>
<feature type="transmembrane region" description="Helical" evidence="1">
    <location>
        <begin position="219"/>
        <end position="240"/>
    </location>
</feature>
<feature type="transmembrane region" description="Helical" evidence="1">
    <location>
        <begin position="298"/>
        <end position="312"/>
    </location>
</feature>
<feature type="region of interest" description="Disordered" evidence="2">
    <location>
        <begin position="1"/>
        <end position="22"/>
    </location>
</feature>
<feature type="compositionally biased region" description="Polar residues" evidence="2">
    <location>
        <begin position="11"/>
        <end position="22"/>
    </location>
</feature>
<feature type="binding site" description="axial binding residue" evidence="1">
    <location>
        <position position="140"/>
    </location>
    <ligand>
        <name>a chlorophyll</name>
        <dbReference type="ChEBI" id="CHEBI:139291"/>
    </ligand>
    <ligandPart>
        <name>Mg</name>
        <dbReference type="ChEBI" id="CHEBI:25107"/>
    </ligandPart>
</feature>
<feature type="binding site" description="axial binding residue" evidence="1">
    <location>
        <position position="220"/>
    </location>
    <ligand>
        <name>a chlorophyll</name>
        <dbReference type="ChEBI" id="CHEBI:139291"/>
    </ligand>
    <ligandPart>
        <name>Mg</name>
        <dbReference type="ChEBI" id="CHEBI:25107"/>
    </ligandPart>
</feature>
<feature type="site" description="Tyrosine radical intermediate" evidence="1">
    <location>
        <position position="183"/>
    </location>
</feature>
<feature type="site" description="Stabilizes free radical intermediate" evidence="1">
    <location>
        <position position="212"/>
    </location>
</feature>
<accession>P0DOC9</accession>
<proteinExistence type="evidence at protein level"/>